<protein>
    <recommendedName>
        <fullName evidence="1">Pyridoxine/pyridoxamine 5'-phosphate oxidase</fullName>
        <ecNumber evidence="1">1.4.3.5</ecNumber>
    </recommendedName>
    <alternativeName>
        <fullName evidence="1">PNP/PMP oxidase</fullName>
        <shortName evidence="1">PNPOx</shortName>
    </alternativeName>
    <alternativeName>
        <fullName evidence="1">Pyridoxal 5'-phosphate synthase</fullName>
    </alternativeName>
</protein>
<accession>Q2GJ82</accession>
<evidence type="ECO:0000255" key="1">
    <source>
        <dbReference type="HAMAP-Rule" id="MF_01629"/>
    </source>
</evidence>
<reference key="1">
    <citation type="journal article" date="2006" name="PLoS Genet.">
        <title>Comparative genomics of emerging human ehrlichiosis agents.</title>
        <authorList>
            <person name="Dunning Hotopp J.C."/>
            <person name="Lin M."/>
            <person name="Madupu R."/>
            <person name="Crabtree J."/>
            <person name="Angiuoli S.V."/>
            <person name="Eisen J.A."/>
            <person name="Seshadri R."/>
            <person name="Ren Q."/>
            <person name="Wu M."/>
            <person name="Utterback T.R."/>
            <person name="Smith S."/>
            <person name="Lewis M."/>
            <person name="Khouri H."/>
            <person name="Zhang C."/>
            <person name="Niu H."/>
            <person name="Lin Q."/>
            <person name="Ohashi N."/>
            <person name="Zhi N."/>
            <person name="Nelson W.C."/>
            <person name="Brinkac L.M."/>
            <person name="Dodson R.J."/>
            <person name="Rosovitz M.J."/>
            <person name="Sundaram J.P."/>
            <person name="Daugherty S.C."/>
            <person name="Davidsen T."/>
            <person name="Durkin A.S."/>
            <person name="Gwinn M.L."/>
            <person name="Haft D.H."/>
            <person name="Selengut J.D."/>
            <person name="Sullivan S.A."/>
            <person name="Zafar N."/>
            <person name="Zhou L."/>
            <person name="Benahmed F."/>
            <person name="Forberger H."/>
            <person name="Halpin R."/>
            <person name="Mulligan S."/>
            <person name="Robinson J."/>
            <person name="White O."/>
            <person name="Rikihisa Y."/>
            <person name="Tettelin H."/>
        </authorList>
    </citation>
    <scope>NUCLEOTIDE SEQUENCE [LARGE SCALE GENOMIC DNA]</scope>
    <source>
        <strain>HZ</strain>
    </source>
</reference>
<feature type="chain" id="PRO_0000255852" description="Pyridoxine/pyridoxamine 5'-phosphate oxidase">
    <location>
        <begin position="1"/>
        <end position="206"/>
    </location>
</feature>
<feature type="binding site" evidence="1">
    <location>
        <begin position="54"/>
        <end position="59"/>
    </location>
    <ligand>
        <name>FMN</name>
        <dbReference type="ChEBI" id="CHEBI:58210"/>
    </ligand>
</feature>
<feature type="binding site" evidence="1">
    <location>
        <position position="59"/>
    </location>
    <ligand>
        <name>substrate</name>
    </ligand>
</feature>
<feature type="binding site" evidence="1">
    <location>
        <begin position="69"/>
        <end position="70"/>
    </location>
    <ligand>
        <name>FMN</name>
        <dbReference type="ChEBI" id="CHEBI:58210"/>
    </ligand>
</feature>
<feature type="binding site" evidence="1">
    <location>
        <position position="75"/>
    </location>
    <ligand>
        <name>FMN</name>
        <dbReference type="ChEBI" id="CHEBI:58210"/>
    </ligand>
</feature>
<feature type="binding site" evidence="1">
    <location>
        <position position="76"/>
    </location>
    <ligand>
        <name>FMN</name>
        <dbReference type="ChEBI" id="CHEBI:58210"/>
    </ligand>
</feature>
<feature type="binding site" evidence="1">
    <location>
        <position position="98"/>
    </location>
    <ligand>
        <name>FMN</name>
        <dbReference type="ChEBI" id="CHEBI:58210"/>
    </ligand>
</feature>
<feature type="binding site" evidence="1">
    <location>
        <position position="116"/>
    </location>
    <ligand>
        <name>substrate</name>
    </ligand>
</feature>
<feature type="binding site" evidence="1">
    <location>
        <position position="120"/>
    </location>
    <ligand>
        <name>substrate</name>
    </ligand>
</feature>
<feature type="binding site" evidence="1">
    <location>
        <position position="124"/>
    </location>
    <ligand>
        <name>substrate</name>
    </ligand>
</feature>
<feature type="binding site" evidence="1">
    <location>
        <begin position="133"/>
        <end position="134"/>
    </location>
    <ligand>
        <name>FMN</name>
        <dbReference type="ChEBI" id="CHEBI:58210"/>
    </ligand>
</feature>
<feature type="binding site" evidence="1">
    <location>
        <position position="178"/>
    </location>
    <ligand>
        <name>FMN</name>
        <dbReference type="ChEBI" id="CHEBI:58210"/>
    </ligand>
</feature>
<feature type="binding site" evidence="1">
    <location>
        <begin position="184"/>
        <end position="186"/>
    </location>
    <ligand>
        <name>substrate</name>
    </ligand>
</feature>
<feature type="binding site" evidence="1">
    <location>
        <position position="188"/>
    </location>
    <ligand>
        <name>FMN</name>
        <dbReference type="ChEBI" id="CHEBI:58210"/>
    </ligand>
</feature>
<comment type="function">
    <text evidence="1">Catalyzes the oxidation of either pyridoxine 5'-phosphate (PNP) or pyridoxamine 5'-phosphate (PMP) into pyridoxal 5'-phosphate (PLP).</text>
</comment>
<comment type="catalytic activity">
    <reaction evidence="1">
        <text>pyridoxamine 5'-phosphate + O2 + H2O = pyridoxal 5'-phosphate + H2O2 + NH4(+)</text>
        <dbReference type="Rhea" id="RHEA:15817"/>
        <dbReference type="ChEBI" id="CHEBI:15377"/>
        <dbReference type="ChEBI" id="CHEBI:15379"/>
        <dbReference type="ChEBI" id="CHEBI:16240"/>
        <dbReference type="ChEBI" id="CHEBI:28938"/>
        <dbReference type="ChEBI" id="CHEBI:58451"/>
        <dbReference type="ChEBI" id="CHEBI:597326"/>
        <dbReference type="EC" id="1.4.3.5"/>
    </reaction>
</comment>
<comment type="catalytic activity">
    <reaction evidence="1">
        <text>pyridoxine 5'-phosphate + O2 = pyridoxal 5'-phosphate + H2O2</text>
        <dbReference type="Rhea" id="RHEA:15149"/>
        <dbReference type="ChEBI" id="CHEBI:15379"/>
        <dbReference type="ChEBI" id="CHEBI:16240"/>
        <dbReference type="ChEBI" id="CHEBI:58589"/>
        <dbReference type="ChEBI" id="CHEBI:597326"/>
        <dbReference type="EC" id="1.4.3.5"/>
    </reaction>
</comment>
<comment type="cofactor">
    <cofactor evidence="1">
        <name>FMN</name>
        <dbReference type="ChEBI" id="CHEBI:58210"/>
    </cofactor>
    <text evidence="1">Binds 1 FMN per subunit.</text>
</comment>
<comment type="pathway">
    <text evidence="1">Cofactor metabolism; pyridoxal 5'-phosphate salvage; pyridoxal 5'-phosphate from pyridoxamine 5'-phosphate: step 1/1.</text>
</comment>
<comment type="pathway">
    <text evidence="1">Cofactor metabolism; pyridoxal 5'-phosphate salvage; pyridoxal 5'-phosphate from pyridoxine 5'-phosphate: step 1/1.</text>
</comment>
<comment type="subunit">
    <text evidence="1">Homodimer.</text>
</comment>
<comment type="similarity">
    <text evidence="1">Belongs to the pyridoxamine 5'-phosphate oxidase family.</text>
</comment>
<organism>
    <name type="scientific">Anaplasma phagocytophilum (strain HZ)</name>
    <dbReference type="NCBI Taxonomy" id="212042"/>
    <lineage>
        <taxon>Bacteria</taxon>
        <taxon>Pseudomonadati</taxon>
        <taxon>Pseudomonadota</taxon>
        <taxon>Alphaproteobacteria</taxon>
        <taxon>Rickettsiales</taxon>
        <taxon>Anaplasmataceae</taxon>
        <taxon>Anaplasma</taxon>
        <taxon>phagocytophilum group</taxon>
    </lineage>
</organism>
<dbReference type="EC" id="1.4.3.5" evidence="1"/>
<dbReference type="EMBL" id="CP000235">
    <property type="protein sequence ID" value="ABD44041.1"/>
    <property type="molecule type" value="Genomic_DNA"/>
</dbReference>
<dbReference type="RefSeq" id="WP_011451082.1">
    <property type="nucleotide sequence ID" value="NC_007797.1"/>
</dbReference>
<dbReference type="SMR" id="Q2GJ82"/>
<dbReference type="STRING" id="212042.APH_1008"/>
<dbReference type="PaxDb" id="212042-APH_1008"/>
<dbReference type="EnsemblBacteria" id="ABD44041">
    <property type="protein sequence ID" value="ABD44041"/>
    <property type="gene ID" value="APH_1008"/>
</dbReference>
<dbReference type="GeneID" id="92748055"/>
<dbReference type="KEGG" id="aph:APH_1008"/>
<dbReference type="eggNOG" id="COG0259">
    <property type="taxonomic scope" value="Bacteria"/>
</dbReference>
<dbReference type="HOGENOM" id="CLU_032263_2_2_5"/>
<dbReference type="UniPathway" id="UPA01068">
    <property type="reaction ID" value="UER00304"/>
</dbReference>
<dbReference type="UniPathway" id="UPA01068">
    <property type="reaction ID" value="UER00305"/>
</dbReference>
<dbReference type="Proteomes" id="UP000001943">
    <property type="component" value="Chromosome"/>
</dbReference>
<dbReference type="GO" id="GO:0010181">
    <property type="term" value="F:FMN binding"/>
    <property type="evidence" value="ECO:0007669"/>
    <property type="project" value="UniProtKB-UniRule"/>
</dbReference>
<dbReference type="GO" id="GO:0004733">
    <property type="term" value="F:pyridoxamine phosphate oxidase activity"/>
    <property type="evidence" value="ECO:0007669"/>
    <property type="project" value="UniProtKB-UniRule"/>
</dbReference>
<dbReference type="GO" id="GO:0008615">
    <property type="term" value="P:pyridoxine biosynthetic process"/>
    <property type="evidence" value="ECO:0007669"/>
    <property type="project" value="UniProtKB-KW"/>
</dbReference>
<dbReference type="FunFam" id="2.30.110.10:FF:000020">
    <property type="entry name" value="PNPO isoform 11"/>
    <property type="match status" value="1"/>
</dbReference>
<dbReference type="Gene3D" id="2.30.110.10">
    <property type="entry name" value="Electron Transport, Fmn-binding Protein, Chain A"/>
    <property type="match status" value="1"/>
</dbReference>
<dbReference type="HAMAP" id="MF_01629">
    <property type="entry name" value="PdxH"/>
    <property type="match status" value="1"/>
</dbReference>
<dbReference type="InterPro" id="IPR000659">
    <property type="entry name" value="Pyridox_Oxase"/>
</dbReference>
<dbReference type="InterPro" id="IPR019740">
    <property type="entry name" value="Pyridox_Oxase_CS"/>
</dbReference>
<dbReference type="InterPro" id="IPR011576">
    <property type="entry name" value="Pyridox_Oxase_N"/>
</dbReference>
<dbReference type="InterPro" id="IPR019576">
    <property type="entry name" value="Pyridoxamine_oxidase_dimer_C"/>
</dbReference>
<dbReference type="InterPro" id="IPR012349">
    <property type="entry name" value="Split_barrel_FMN-bd"/>
</dbReference>
<dbReference type="NCBIfam" id="TIGR00558">
    <property type="entry name" value="pdxH"/>
    <property type="match status" value="1"/>
</dbReference>
<dbReference type="NCBIfam" id="NF004231">
    <property type="entry name" value="PRK05679.1"/>
    <property type="match status" value="1"/>
</dbReference>
<dbReference type="PANTHER" id="PTHR10851:SF0">
    <property type="entry name" value="PYRIDOXINE-5'-PHOSPHATE OXIDASE"/>
    <property type="match status" value="1"/>
</dbReference>
<dbReference type="PANTHER" id="PTHR10851">
    <property type="entry name" value="PYRIDOXINE-5-PHOSPHATE OXIDASE"/>
    <property type="match status" value="1"/>
</dbReference>
<dbReference type="Pfam" id="PF10590">
    <property type="entry name" value="PNP_phzG_C"/>
    <property type="match status" value="1"/>
</dbReference>
<dbReference type="Pfam" id="PF01243">
    <property type="entry name" value="PNPOx_N"/>
    <property type="match status" value="1"/>
</dbReference>
<dbReference type="PIRSF" id="PIRSF000190">
    <property type="entry name" value="Pyd_amn-ph_oxd"/>
    <property type="match status" value="1"/>
</dbReference>
<dbReference type="SUPFAM" id="SSF50475">
    <property type="entry name" value="FMN-binding split barrel"/>
    <property type="match status" value="1"/>
</dbReference>
<dbReference type="PROSITE" id="PS01064">
    <property type="entry name" value="PYRIDOX_OXIDASE"/>
    <property type="match status" value="1"/>
</dbReference>
<proteinExistence type="inferred from homology"/>
<sequence>MTINKEGLRVDACSGDPMSIFGLWYEEVLRVKSVREPSAMVLATCDSENRPSARVVLLKRYSDAGFEFYTNLESRKAREIALNPCVSLVFDWRPIYKQVRVEGIAEFMDASESDAYFASRSRESQIGAWCSRQSMILEDRDVLLSKIELMEREYEGREIPRPKFWGGIRVVPNVIEFWMDGKHRLHDRRQYSKNIDGTWTSVYLYP</sequence>
<keyword id="KW-0285">Flavoprotein</keyword>
<keyword id="KW-0288">FMN</keyword>
<keyword id="KW-0560">Oxidoreductase</keyword>
<keyword id="KW-0664">Pyridoxine biosynthesis</keyword>
<name>PDXH_ANAPZ</name>
<gene>
    <name evidence="1" type="primary">pdxH</name>
    <name type="ordered locus">APH_1008</name>
</gene>